<proteinExistence type="inferred from homology"/>
<dbReference type="EC" id="2.4.2.9" evidence="1"/>
<dbReference type="EMBL" id="AE005673">
    <property type="protein sequence ID" value="AAK24239.1"/>
    <property type="molecule type" value="Genomic_DNA"/>
</dbReference>
<dbReference type="PIR" id="C87530">
    <property type="entry name" value="C87530"/>
</dbReference>
<dbReference type="RefSeq" id="NP_421071.1">
    <property type="nucleotide sequence ID" value="NC_002696.2"/>
</dbReference>
<dbReference type="RefSeq" id="WP_010920129.1">
    <property type="nucleotide sequence ID" value="NC_002696.2"/>
</dbReference>
<dbReference type="SMR" id="Q9A627"/>
<dbReference type="STRING" id="190650.CC_2268"/>
<dbReference type="EnsemblBacteria" id="AAK24239">
    <property type="protein sequence ID" value="AAK24239"/>
    <property type="gene ID" value="CC_2268"/>
</dbReference>
<dbReference type="KEGG" id="ccr:CC_2268"/>
<dbReference type="PATRIC" id="fig|190650.5.peg.2286"/>
<dbReference type="eggNOG" id="COG0035">
    <property type="taxonomic scope" value="Bacteria"/>
</dbReference>
<dbReference type="HOGENOM" id="CLU_067096_2_2_5"/>
<dbReference type="BioCyc" id="CAULO:CC2268-MONOMER"/>
<dbReference type="UniPathway" id="UPA00574">
    <property type="reaction ID" value="UER00636"/>
</dbReference>
<dbReference type="Proteomes" id="UP000001816">
    <property type="component" value="Chromosome"/>
</dbReference>
<dbReference type="GO" id="GO:0005525">
    <property type="term" value="F:GTP binding"/>
    <property type="evidence" value="ECO:0007669"/>
    <property type="project" value="UniProtKB-KW"/>
</dbReference>
<dbReference type="GO" id="GO:0000287">
    <property type="term" value="F:magnesium ion binding"/>
    <property type="evidence" value="ECO:0007669"/>
    <property type="project" value="UniProtKB-UniRule"/>
</dbReference>
<dbReference type="GO" id="GO:0004845">
    <property type="term" value="F:uracil phosphoribosyltransferase activity"/>
    <property type="evidence" value="ECO:0007669"/>
    <property type="project" value="UniProtKB-UniRule"/>
</dbReference>
<dbReference type="GO" id="GO:0044206">
    <property type="term" value="P:UMP salvage"/>
    <property type="evidence" value="ECO:0007669"/>
    <property type="project" value="UniProtKB-UniRule"/>
</dbReference>
<dbReference type="GO" id="GO:0006223">
    <property type="term" value="P:uracil salvage"/>
    <property type="evidence" value="ECO:0007669"/>
    <property type="project" value="InterPro"/>
</dbReference>
<dbReference type="CDD" id="cd06223">
    <property type="entry name" value="PRTases_typeI"/>
    <property type="match status" value="1"/>
</dbReference>
<dbReference type="FunFam" id="3.40.50.2020:FF:000003">
    <property type="entry name" value="Uracil phosphoribosyltransferase"/>
    <property type="match status" value="1"/>
</dbReference>
<dbReference type="Gene3D" id="3.40.50.2020">
    <property type="match status" value="1"/>
</dbReference>
<dbReference type="HAMAP" id="MF_01218_B">
    <property type="entry name" value="Upp_B"/>
    <property type="match status" value="1"/>
</dbReference>
<dbReference type="InterPro" id="IPR000836">
    <property type="entry name" value="PRibTrfase_dom"/>
</dbReference>
<dbReference type="InterPro" id="IPR029057">
    <property type="entry name" value="PRTase-like"/>
</dbReference>
<dbReference type="InterPro" id="IPR034332">
    <property type="entry name" value="Upp_B"/>
</dbReference>
<dbReference type="InterPro" id="IPR050054">
    <property type="entry name" value="UPRTase/APRTase"/>
</dbReference>
<dbReference type="InterPro" id="IPR005765">
    <property type="entry name" value="Ura_phspho_trans"/>
</dbReference>
<dbReference type="NCBIfam" id="NF001097">
    <property type="entry name" value="PRK00129.1"/>
    <property type="match status" value="1"/>
</dbReference>
<dbReference type="NCBIfam" id="TIGR01091">
    <property type="entry name" value="upp"/>
    <property type="match status" value="1"/>
</dbReference>
<dbReference type="PANTHER" id="PTHR32315">
    <property type="entry name" value="ADENINE PHOSPHORIBOSYLTRANSFERASE"/>
    <property type="match status" value="1"/>
</dbReference>
<dbReference type="PANTHER" id="PTHR32315:SF4">
    <property type="entry name" value="URACIL PHOSPHORIBOSYLTRANSFERASE, CHLOROPLASTIC"/>
    <property type="match status" value="1"/>
</dbReference>
<dbReference type="Pfam" id="PF14681">
    <property type="entry name" value="UPRTase"/>
    <property type="match status" value="1"/>
</dbReference>
<dbReference type="SUPFAM" id="SSF53271">
    <property type="entry name" value="PRTase-like"/>
    <property type="match status" value="1"/>
</dbReference>
<keyword id="KW-0021">Allosteric enzyme</keyword>
<keyword id="KW-0328">Glycosyltransferase</keyword>
<keyword id="KW-0342">GTP-binding</keyword>
<keyword id="KW-0460">Magnesium</keyword>
<keyword id="KW-0547">Nucleotide-binding</keyword>
<keyword id="KW-1185">Reference proteome</keyword>
<keyword id="KW-0808">Transferase</keyword>
<protein>
    <recommendedName>
        <fullName evidence="1">Uracil phosphoribosyltransferase</fullName>
        <ecNumber evidence="1">2.4.2.9</ecNumber>
    </recommendedName>
    <alternativeName>
        <fullName evidence="1">UMP pyrophosphorylase</fullName>
    </alternativeName>
    <alternativeName>
        <fullName evidence="1">UPRTase</fullName>
    </alternativeName>
</protein>
<sequence>MSNVTVVSHPLVQHKLTKMRDKTTSTKTFRALMRETATLICYEVTRDLPMDEVQIETPVAPTKAYEIAGKKLVFAPILRTGLGMCEGMLDLVPSARVAHIGLYRDHETLEAVEYYFKAPEDIAGRLVIVVDPMLATGHSAIAAIARLKHYGVTNLRFVCLLAAQAGVDALREAHPDVPIWTAAIDQTLNDHGYIVPGLGDAGDRTFGTR</sequence>
<accession>Q9A627</accession>
<name>UPP_CAUVC</name>
<gene>
    <name evidence="1" type="primary">upp</name>
    <name type="ordered locus">CC_2268</name>
</gene>
<comment type="function">
    <text evidence="1">Catalyzes the conversion of uracil and 5-phospho-alpha-D-ribose 1-diphosphate (PRPP) to UMP and diphosphate.</text>
</comment>
<comment type="catalytic activity">
    <reaction evidence="1">
        <text>UMP + diphosphate = 5-phospho-alpha-D-ribose 1-diphosphate + uracil</text>
        <dbReference type="Rhea" id="RHEA:13017"/>
        <dbReference type="ChEBI" id="CHEBI:17568"/>
        <dbReference type="ChEBI" id="CHEBI:33019"/>
        <dbReference type="ChEBI" id="CHEBI:57865"/>
        <dbReference type="ChEBI" id="CHEBI:58017"/>
        <dbReference type="EC" id="2.4.2.9"/>
    </reaction>
</comment>
<comment type="cofactor">
    <cofactor evidence="1">
        <name>Mg(2+)</name>
        <dbReference type="ChEBI" id="CHEBI:18420"/>
    </cofactor>
    <text evidence="1">Binds 1 Mg(2+) ion per subunit. The magnesium is bound as Mg-PRPP.</text>
</comment>
<comment type="activity regulation">
    <text evidence="1">Allosterically activated by GTP.</text>
</comment>
<comment type="pathway">
    <text evidence="1">Pyrimidine metabolism; UMP biosynthesis via salvage pathway; UMP from uracil: step 1/1.</text>
</comment>
<comment type="similarity">
    <text evidence="1">Belongs to the UPRTase family.</text>
</comment>
<reference key="1">
    <citation type="journal article" date="2001" name="Proc. Natl. Acad. Sci. U.S.A.">
        <title>Complete genome sequence of Caulobacter crescentus.</title>
        <authorList>
            <person name="Nierman W.C."/>
            <person name="Feldblyum T.V."/>
            <person name="Laub M.T."/>
            <person name="Paulsen I.T."/>
            <person name="Nelson K.E."/>
            <person name="Eisen J.A."/>
            <person name="Heidelberg J.F."/>
            <person name="Alley M.R.K."/>
            <person name="Ohta N."/>
            <person name="Maddock J.R."/>
            <person name="Potocka I."/>
            <person name="Nelson W.C."/>
            <person name="Newton A."/>
            <person name="Stephens C."/>
            <person name="Phadke N.D."/>
            <person name="Ely B."/>
            <person name="DeBoy R.T."/>
            <person name="Dodson R.J."/>
            <person name="Durkin A.S."/>
            <person name="Gwinn M.L."/>
            <person name="Haft D.H."/>
            <person name="Kolonay J.F."/>
            <person name="Smit J."/>
            <person name="Craven M.B."/>
            <person name="Khouri H.M."/>
            <person name="Shetty J."/>
            <person name="Berry K.J."/>
            <person name="Utterback T.R."/>
            <person name="Tran K."/>
            <person name="Wolf A.M."/>
            <person name="Vamathevan J.J."/>
            <person name="Ermolaeva M.D."/>
            <person name="White O."/>
            <person name="Salzberg S.L."/>
            <person name="Venter J.C."/>
            <person name="Shapiro L."/>
            <person name="Fraser C.M."/>
        </authorList>
    </citation>
    <scope>NUCLEOTIDE SEQUENCE [LARGE SCALE GENOMIC DNA]</scope>
    <source>
        <strain>ATCC 19089 / CIP 103742 / CB 15</strain>
    </source>
</reference>
<organism>
    <name type="scientific">Caulobacter vibrioides (strain ATCC 19089 / CIP 103742 / CB 15)</name>
    <name type="common">Caulobacter crescentus</name>
    <dbReference type="NCBI Taxonomy" id="190650"/>
    <lineage>
        <taxon>Bacteria</taxon>
        <taxon>Pseudomonadati</taxon>
        <taxon>Pseudomonadota</taxon>
        <taxon>Alphaproteobacteria</taxon>
        <taxon>Caulobacterales</taxon>
        <taxon>Caulobacteraceae</taxon>
        <taxon>Caulobacter</taxon>
    </lineage>
</organism>
<feature type="chain" id="PRO_0000120812" description="Uracil phosphoribosyltransferase">
    <location>
        <begin position="1"/>
        <end position="209"/>
    </location>
</feature>
<feature type="binding site" evidence="1">
    <location>
        <position position="79"/>
    </location>
    <ligand>
        <name>5-phospho-alpha-D-ribose 1-diphosphate</name>
        <dbReference type="ChEBI" id="CHEBI:58017"/>
    </ligand>
</feature>
<feature type="binding site" evidence="1">
    <location>
        <position position="104"/>
    </location>
    <ligand>
        <name>5-phospho-alpha-D-ribose 1-diphosphate</name>
        <dbReference type="ChEBI" id="CHEBI:58017"/>
    </ligand>
</feature>
<feature type="binding site" evidence="1">
    <location>
        <begin position="131"/>
        <end position="139"/>
    </location>
    <ligand>
        <name>5-phospho-alpha-D-ribose 1-diphosphate</name>
        <dbReference type="ChEBI" id="CHEBI:58017"/>
    </ligand>
</feature>
<feature type="binding site" evidence="1">
    <location>
        <position position="194"/>
    </location>
    <ligand>
        <name>uracil</name>
        <dbReference type="ChEBI" id="CHEBI:17568"/>
    </ligand>
</feature>
<feature type="binding site" evidence="1">
    <location>
        <begin position="199"/>
        <end position="201"/>
    </location>
    <ligand>
        <name>uracil</name>
        <dbReference type="ChEBI" id="CHEBI:17568"/>
    </ligand>
</feature>
<feature type="binding site" evidence="1">
    <location>
        <position position="200"/>
    </location>
    <ligand>
        <name>5-phospho-alpha-D-ribose 1-diphosphate</name>
        <dbReference type="ChEBI" id="CHEBI:58017"/>
    </ligand>
</feature>
<evidence type="ECO:0000255" key="1">
    <source>
        <dbReference type="HAMAP-Rule" id="MF_01218"/>
    </source>
</evidence>